<protein>
    <recommendedName>
        <fullName>Protection of telomeres protein 1</fullName>
    </recommendedName>
    <alternativeName>
        <fullName>POT1-like telomere end-binding protein</fullName>
    </alternativeName>
</protein>
<name>POTE1_MACFA</name>
<organism>
    <name type="scientific">Macaca fascicularis</name>
    <name type="common">Crab-eating macaque</name>
    <name type="synonym">Cynomolgus monkey</name>
    <dbReference type="NCBI Taxonomy" id="9541"/>
    <lineage>
        <taxon>Eukaryota</taxon>
        <taxon>Metazoa</taxon>
        <taxon>Chordata</taxon>
        <taxon>Craniata</taxon>
        <taxon>Vertebrata</taxon>
        <taxon>Euteleostomi</taxon>
        <taxon>Mammalia</taxon>
        <taxon>Eutheria</taxon>
        <taxon>Euarchontoglires</taxon>
        <taxon>Primates</taxon>
        <taxon>Haplorrhini</taxon>
        <taxon>Catarrhini</taxon>
        <taxon>Cercopithecidae</taxon>
        <taxon>Cercopithecinae</taxon>
        <taxon>Macaca</taxon>
    </lineage>
</organism>
<accession>Q95K48</accession>
<evidence type="ECO:0000250" key="1"/>
<evidence type="ECO:0000250" key="2">
    <source>
        <dbReference type="UniProtKB" id="Q9NUX5"/>
    </source>
</evidence>
<evidence type="ECO:0000305" key="3"/>
<proteinExistence type="evidence at transcript level"/>
<dbReference type="EMBL" id="AB066545">
    <property type="protein sequence ID" value="BAB62219.1"/>
    <property type="molecule type" value="mRNA"/>
</dbReference>
<dbReference type="RefSeq" id="NP_001306488.1">
    <property type="nucleotide sequence ID" value="NM_001319559.1"/>
</dbReference>
<dbReference type="SMR" id="Q95K48"/>
<dbReference type="STRING" id="9541.ENSMFAP00000003291"/>
<dbReference type="eggNOG" id="KOG4757">
    <property type="taxonomic scope" value="Eukaryota"/>
</dbReference>
<dbReference type="Proteomes" id="UP000233100">
    <property type="component" value="Unplaced"/>
</dbReference>
<dbReference type="GO" id="GO:0000781">
    <property type="term" value="C:chromosome, telomeric region"/>
    <property type="evidence" value="ECO:0000250"/>
    <property type="project" value="UniProtKB"/>
</dbReference>
<dbReference type="GO" id="GO:0000783">
    <property type="term" value="C:nuclear telomere cap complex"/>
    <property type="evidence" value="ECO:0007669"/>
    <property type="project" value="TreeGrafter"/>
</dbReference>
<dbReference type="GO" id="GO:0098505">
    <property type="term" value="F:G-rich strand telomeric DNA binding"/>
    <property type="evidence" value="ECO:0007669"/>
    <property type="project" value="TreeGrafter"/>
</dbReference>
<dbReference type="GO" id="GO:0043047">
    <property type="term" value="F:single-stranded telomeric DNA binding"/>
    <property type="evidence" value="ECO:0000250"/>
    <property type="project" value="UniProtKB"/>
</dbReference>
<dbReference type="GO" id="GO:0010521">
    <property type="term" value="F:telomerase inhibitor activity"/>
    <property type="evidence" value="ECO:0007669"/>
    <property type="project" value="TreeGrafter"/>
</dbReference>
<dbReference type="GO" id="GO:0042162">
    <property type="term" value="F:telomeric DNA binding"/>
    <property type="evidence" value="ECO:0000250"/>
    <property type="project" value="UniProtKB"/>
</dbReference>
<dbReference type="GO" id="GO:0032210">
    <property type="term" value="P:regulation of telomere maintenance via telomerase"/>
    <property type="evidence" value="ECO:0007669"/>
    <property type="project" value="TreeGrafter"/>
</dbReference>
<dbReference type="GO" id="GO:0016233">
    <property type="term" value="P:telomere capping"/>
    <property type="evidence" value="ECO:0007669"/>
    <property type="project" value="TreeGrafter"/>
</dbReference>
<dbReference type="GO" id="GO:0007004">
    <property type="term" value="P:telomere maintenance via telomerase"/>
    <property type="evidence" value="ECO:0000250"/>
    <property type="project" value="UniProtKB"/>
</dbReference>
<dbReference type="CDD" id="cd04497">
    <property type="entry name" value="hPOT1_OB1_like"/>
    <property type="match status" value="1"/>
</dbReference>
<dbReference type="CDD" id="cd04498">
    <property type="entry name" value="hPOT1_OB2"/>
    <property type="match status" value="1"/>
</dbReference>
<dbReference type="CDD" id="cd20374">
    <property type="entry name" value="Pot1C"/>
    <property type="match status" value="1"/>
</dbReference>
<dbReference type="FunFam" id="2.40.50.140:FF:000119">
    <property type="entry name" value="Protection of telomeres 1 homolog"/>
    <property type="match status" value="1"/>
</dbReference>
<dbReference type="FunFam" id="2.40.50.140:FF:000138">
    <property type="entry name" value="Protection of telomeres 1 homolog"/>
    <property type="match status" value="1"/>
</dbReference>
<dbReference type="Gene3D" id="2.40.50.140">
    <property type="entry name" value="Nucleic acid-binding proteins"/>
    <property type="match status" value="2"/>
</dbReference>
<dbReference type="InterPro" id="IPR012340">
    <property type="entry name" value="NA-bd_OB-fold"/>
</dbReference>
<dbReference type="InterPro" id="IPR028389">
    <property type="entry name" value="POT1"/>
</dbReference>
<dbReference type="InterPro" id="IPR048953">
    <property type="entry name" value="POT1_C_insert"/>
</dbReference>
<dbReference type="InterPro" id="IPR032042">
    <property type="entry name" value="POT1PC"/>
</dbReference>
<dbReference type="InterPro" id="IPR011564">
    <property type="entry name" value="Telomer_end-bd_POT1/Cdc13"/>
</dbReference>
<dbReference type="PANTHER" id="PTHR14513">
    <property type="entry name" value="PROTECTION OF TELOMERES 1"/>
    <property type="match status" value="1"/>
</dbReference>
<dbReference type="PANTHER" id="PTHR14513:SF0">
    <property type="entry name" value="PROTECTION OF TELOMERES PROTEIN 1"/>
    <property type="match status" value="1"/>
</dbReference>
<dbReference type="Pfam" id="PF02765">
    <property type="entry name" value="POT1"/>
    <property type="match status" value="1"/>
</dbReference>
<dbReference type="Pfam" id="PF21375">
    <property type="entry name" value="POT1_C_insert"/>
    <property type="match status" value="1"/>
</dbReference>
<dbReference type="Pfam" id="PF16686">
    <property type="entry name" value="POT1PC"/>
    <property type="match status" value="1"/>
</dbReference>
<dbReference type="SMART" id="SM00976">
    <property type="entry name" value="Telo_bind"/>
    <property type="match status" value="1"/>
</dbReference>
<dbReference type="SUPFAM" id="SSF50249">
    <property type="entry name" value="Nucleic acid-binding proteins"/>
    <property type="match status" value="2"/>
</dbReference>
<gene>
    <name type="primary">POT1</name>
    <name type="ORF">QtrA-10940</name>
</gene>
<reference key="1">
    <citation type="submission" date="2001-07" db="EMBL/GenBank/DDBJ databases">
        <title>Isolation of full-length cDNA clones from macaque brain cDNA libraries.</title>
        <authorList>
            <person name="Osada N."/>
            <person name="Hida M."/>
            <person name="Kusuda J."/>
            <person name="Tanuma R."/>
            <person name="Iseki K."/>
            <person name="Hirai M."/>
            <person name="Terao K."/>
            <person name="Suzuki Y."/>
            <person name="Sugano S."/>
            <person name="Hashimoto K."/>
        </authorList>
    </citation>
    <scope>NUCLEOTIDE SEQUENCE [LARGE SCALE MRNA]</scope>
    <source>
        <tissue>Temporal cortex</tissue>
    </source>
</reference>
<keyword id="KW-0158">Chromosome</keyword>
<keyword id="KW-0238">DNA-binding</keyword>
<keyword id="KW-0539">Nucleus</keyword>
<keyword id="KW-1185">Reference proteome</keyword>
<keyword id="KW-0779">Telomere</keyword>
<comment type="function">
    <text evidence="1">Component of the telomerase ribonucleoprotein (RNP) complex that is essential for the replication of chromosome termini. Is a component of the double-stranded telomeric DNA-binding TRF1 complex which is involved in the regulation of telomere length by cis-inhibition of telomerase. Also acts as a single-stranded telomeric DNA-binding protein and thus may act as a downstream effector of the TRF1 complex and may transduce information about telomere maintenance and/or length to the telomere terminus. Component of the shelterin complex (telosome) that is involved in the regulation of telomere length and protection. Shelterin associates with arrays of double-stranded TTAGGG repeats added by telomerase and protects chromosome ends; without its protective activity, telomeres are no longer hidden from the DNA damage surveillance and chromosome ends are inappropriately processed by DNA repair pathways. Binds to two or more telomeric single-stranded 5'-TTAGGG-3' repeats (G-strand) and with high specificity to a minimal telomeric single-stranded 5'-TAGGGTTAG-3' sequence. Binds telomeric single-stranded sequences internally or at proximity of a 3'-end. Its activity is TERT dependent but it does not increase TERT activity by itself. In contrast, the ACD-POT1 heterodimer enhances telomere elongation by increasing telomerase processivity (By similarity).</text>
</comment>
<comment type="subunit">
    <text evidence="2">Homodimer or homooligomer. Component of the shelterin complex (telosome) composed of TERF1, TERF2, TINF2, TERF2IP, ACD and POT1. Binds single-stranded telomeric DNA as a monomer. Associated component of the telomerase holoenzyme complex. Found in a complex with TERF1, TINF2 and TNKS1. Interacts with TNKS1. Forms heterodimers with ACD. Identified in a complex with ACD and single-stranded telomeric DNA.</text>
</comment>
<comment type="subcellular location">
    <subcellularLocation>
        <location evidence="1">Nucleus</location>
    </subcellularLocation>
    <subcellularLocation>
        <location evidence="1">Chromosome</location>
        <location evidence="1">Telomere</location>
    </subcellularLocation>
    <text evidence="1">Colocalizes with telomeric DNA.</text>
</comment>
<comment type="similarity">
    <text evidence="3">Belongs to the telombin family.</text>
</comment>
<sequence length="634" mass="71524">MSLVPATNYIYTPLNQLKGGTIVNVYGVVKFFKPPYLSKGTDYCSVVTIVDQTNVKLTCLLFSGNYEALPIIYKNGDIVRFHRLKIQVYKKETQGITSSGFASLTFEGTLGAPIIPRTSSKYFNFTTEDHKMVETLRVWASTHMSPSWTLLKLCDVQPMQYFDLTCQLLGKAEVDGASFLLKVWDGTRTPFPSWRVLIQDLVLEGDLSHIHRLQNLTIDILVYDNHVHVARSLKVGSFLRIYSLHTKLQSMNSENQTMLSLEFHLHGGTSYGRGIRVLPETNSDVDQLKKDLESANLTANHHSDVICQSEPDDSFPSSGSVSLYEVERCQQLSATILTDHQYLERTPLCAILKQKAPQQYRIRAKLRSYKPRRLFQSVKLHCPKCHLLQEVPREGDLDIILQDGATKTPDVKLQNTALYDSKIWTTKNQKGRKVAVHFVKNNGILPLSNECLLLIEGGTLSEICKLSNKFNSVIPVRSGHEDLELLDLSAPFLIQGTIHHYGCKQCSSLRSIQNLNSLVDKTSWIPSSVAEVLGIVPLQYVFVMTFTLDDGTGVLEAYLMDSDKFFQIPASEVLMDDDLQKSMDMIMDMFCPPGIKIDAYPWLECFIKSYNVTNGTDNQICYQIFDTTVAEDVI</sequence>
<feature type="chain" id="PRO_0000121729" description="Protection of telomeres protein 1">
    <location>
        <begin position="1"/>
        <end position="634"/>
    </location>
</feature>